<reference key="1">
    <citation type="journal article" date="2000" name="Nature">
        <title>Complete genome sequence of Pseudomonas aeruginosa PAO1, an opportunistic pathogen.</title>
        <authorList>
            <person name="Stover C.K."/>
            <person name="Pham X.-Q.T."/>
            <person name="Erwin A.L."/>
            <person name="Mizoguchi S.D."/>
            <person name="Warrener P."/>
            <person name="Hickey M.J."/>
            <person name="Brinkman F.S.L."/>
            <person name="Hufnagle W.O."/>
            <person name="Kowalik D.J."/>
            <person name="Lagrou M."/>
            <person name="Garber R.L."/>
            <person name="Goltry L."/>
            <person name="Tolentino E."/>
            <person name="Westbrock-Wadman S."/>
            <person name="Yuan Y."/>
            <person name="Brody L.L."/>
            <person name="Coulter S.N."/>
            <person name="Folger K.R."/>
            <person name="Kas A."/>
            <person name="Larbig K."/>
            <person name="Lim R.M."/>
            <person name="Smith K.A."/>
            <person name="Spencer D.H."/>
            <person name="Wong G.K.-S."/>
            <person name="Wu Z."/>
            <person name="Paulsen I.T."/>
            <person name="Reizer J."/>
            <person name="Saier M.H. Jr."/>
            <person name="Hancock R.E.W."/>
            <person name="Lory S."/>
            <person name="Olson M.V."/>
        </authorList>
    </citation>
    <scope>NUCLEOTIDE SEQUENCE [LARGE SCALE GENOMIC DNA]</scope>
    <source>
        <strain>ATCC 15692 / DSM 22644 / CIP 104116 / JCM 14847 / LMG 12228 / 1C / PRS 101 / PAO1</strain>
    </source>
</reference>
<organism>
    <name type="scientific">Pseudomonas aeruginosa (strain ATCC 15692 / DSM 22644 / CIP 104116 / JCM 14847 / LMG 12228 / 1C / PRS 101 / PAO1)</name>
    <dbReference type="NCBI Taxonomy" id="208964"/>
    <lineage>
        <taxon>Bacteria</taxon>
        <taxon>Pseudomonadati</taxon>
        <taxon>Pseudomonadota</taxon>
        <taxon>Gammaproteobacteria</taxon>
        <taxon>Pseudomonadales</taxon>
        <taxon>Pseudomonadaceae</taxon>
        <taxon>Pseudomonas</taxon>
    </lineage>
</organism>
<keyword id="KW-0143">Chaperone</keyword>
<keyword id="KW-1185">Reference proteome</keyword>
<gene>
    <name evidence="1" type="primary">hscB</name>
    <name type="ordered locus">PA3811</name>
</gene>
<sequence length="173" mass="20235">MGKPCHFAQFDLQPAFLVDLDELGQRYRELVRSVHPDRFADAPEREQRLALERAAQLNEAYQTLKSAPRRALYLLTLSGHELPLEATVQDPEFLLQQMQLREELEELQDSADLAGVATFKRRLKAAQAELEREFAACWDDAQRREEAERLVRRMQFLDKLAQEVRQLEERLDD</sequence>
<feature type="chain" id="PRO_0000070979" description="Co-chaperone protein HscB homolog">
    <location>
        <begin position="1"/>
        <end position="173"/>
    </location>
</feature>
<feature type="domain" description="J" evidence="1">
    <location>
        <begin position="5"/>
        <end position="77"/>
    </location>
</feature>
<protein>
    <recommendedName>
        <fullName evidence="1">Co-chaperone protein HscB homolog</fullName>
    </recommendedName>
</protein>
<proteinExistence type="inferred from homology"/>
<evidence type="ECO:0000255" key="1">
    <source>
        <dbReference type="HAMAP-Rule" id="MF_00682"/>
    </source>
</evidence>
<accession>Q9HXJ1</accession>
<dbReference type="EMBL" id="AE004091">
    <property type="protein sequence ID" value="AAG07198.1"/>
    <property type="molecule type" value="Genomic_DNA"/>
</dbReference>
<dbReference type="PIR" id="D83168">
    <property type="entry name" value="D83168"/>
</dbReference>
<dbReference type="RefSeq" id="NP_252500.1">
    <property type="nucleotide sequence ID" value="NC_002516.2"/>
</dbReference>
<dbReference type="RefSeq" id="WP_003092824.1">
    <property type="nucleotide sequence ID" value="NZ_QZGE01000001.1"/>
</dbReference>
<dbReference type="SMR" id="Q9HXJ1"/>
<dbReference type="FunCoup" id="Q9HXJ1">
    <property type="interactions" value="395"/>
</dbReference>
<dbReference type="STRING" id="208964.PA3811"/>
<dbReference type="PaxDb" id="208964-PA3811"/>
<dbReference type="DNASU" id="879937"/>
<dbReference type="GeneID" id="879937"/>
<dbReference type="KEGG" id="pae:PA3811"/>
<dbReference type="PATRIC" id="fig|208964.12.peg.3990"/>
<dbReference type="PseudoCAP" id="PA3811"/>
<dbReference type="HOGENOM" id="CLU_068529_2_0_6"/>
<dbReference type="InParanoid" id="Q9HXJ1"/>
<dbReference type="OrthoDB" id="287587at2"/>
<dbReference type="PhylomeDB" id="Q9HXJ1"/>
<dbReference type="BioCyc" id="PAER208964:G1FZ6-3882-MONOMER"/>
<dbReference type="Proteomes" id="UP000002438">
    <property type="component" value="Chromosome"/>
</dbReference>
<dbReference type="GO" id="GO:1990230">
    <property type="term" value="C:iron-sulfur cluster transfer complex"/>
    <property type="evidence" value="ECO:0000318"/>
    <property type="project" value="GO_Central"/>
</dbReference>
<dbReference type="GO" id="GO:0001671">
    <property type="term" value="F:ATPase activator activity"/>
    <property type="evidence" value="ECO:0007669"/>
    <property type="project" value="InterPro"/>
</dbReference>
<dbReference type="GO" id="GO:0051087">
    <property type="term" value="F:protein-folding chaperone binding"/>
    <property type="evidence" value="ECO:0007669"/>
    <property type="project" value="InterPro"/>
</dbReference>
<dbReference type="GO" id="GO:0044571">
    <property type="term" value="P:[2Fe-2S] cluster assembly"/>
    <property type="evidence" value="ECO:0007669"/>
    <property type="project" value="InterPro"/>
</dbReference>
<dbReference type="GO" id="GO:0051259">
    <property type="term" value="P:protein complex oligomerization"/>
    <property type="evidence" value="ECO:0007669"/>
    <property type="project" value="InterPro"/>
</dbReference>
<dbReference type="GO" id="GO:0006457">
    <property type="term" value="P:protein folding"/>
    <property type="evidence" value="ECO:0007669"/>
    <property type="project" value="UniProtKB-UniRule"/>
</dbReference>
<dbReference type="CDD" id="cd06257">
    <property type="entry name" value="DnaJ"/>
    <property type="match status" value="1"/>
</dbReference>
<dbReference type="FunFam" id="1.10.287.110:FF:000128">
    <property type="entry name" value="Co-chaperone protein HscB homolog"/>
    <property type="match status" value="1"/>
</dbReference>
<dbReference type="FunFam" id="1.20.1280.20:FF:000005">
    <property type="entry name" value="Co-chaperone protein HscB homolog"/>
    <property type="match status" value="1"/>
</dbReference>
<dbReference type="Gene3D" id="1.10.287.110">
    <property type="entry name" value="DnaJ domain"/>
    <property type="match status" value="1"/>
</dbReference>
<dbReference type="Gene3D" id="1.20.1280.20">
    <property type="entry name" value="HscB, C-terminal domain"/>
    <property type="match status" value="1"/>
</dbReference>
<dbReference type="HAMAP" id="MF_00682">
    <property type="entry name" value="HscB"/>
    <property type="match status" value="1"/>
</dbReference>
<dbReference type="InterPro" id="IPR001623">
    <property type="entry name" value="DnaJ_domain"/>
</dbReference>
<dbReference type="InterPro" id="IPR004640">
    <property type="entry name" value="HscB"/>
</dbReference>
<dbReference type="InterPro" id="IPR036386">
    <property type="entry name" value="HscB_C_sf"/>
</dbReference>
<dbReference type="InterPro" id="IPR009073">
    <property type="entry name" value="HscB_oligo_C"/>
</dbReference>
<dbReference type="InterPro" id="IPR036869">
    <property type="entry name" value="J_dom_sf"/>
</dbReference>
<dbReference type="NCBIfam" id="TIGR00714">
    <property type="entry name" value="hscB"/>
    <property type="match status" value="1"/>
</dbReference>
<dbReference type="NCBIfam" id="NF001420">
    <property type="entry name" value="PRK00294.1"/>
    <property type="match status" value="1"/>
</dbReference>
<dbReference type="PANTHER" id="PTHR14021">
    <property type="entry name" value="IRON-SULFUR CLUSTER CO-CHAPERONE PROTEIN HSCB"/>
    <property type="match status" value="1"/>
</dbReference>
<dbReference type="PANTHER" id="PTHR14021:SF15">
    <property type="entry name" value="IRON-SULFUR CLUSTER CO-CHAPERONE PROTEIN HSCB"/>
    <property type="match status" value="1"/>
</dbReference>
<dbReference type="Pfam" id="PF00226">
    <property type="entry name" value="DnaJ"/>
    <property type="match status" value="1"/>
</dbReference>
<dbReference type="Pfam" id="PF07743">
    <property type="entry name" value="HSCB_C"/>
    <property type="match status" value="1"/>
</dbReference>
<dbReference type="SMART" id="SM00271">
    <property type="entry name" value="DnaJ"/>
    <property type="match status" value="1"/>
</dbReference>
<dbReference type="SUPFAM" id="SSF46565">
    <property type="entry name" value="Chaperone J-domain"/>
    <property type="match status" value="1"/>
</dbReference>
<dbReference type="SUPFAM" id="SSF47144">
    <property type="entry name" value="HSC20 (HSCB), C-terminal oligomerisation domain"/>
    <property type="match status" value="1"/>
</dbReference>
<dbReference type="PROSITE" id="PS50076">
    <property type="entry name" value="DNAJ_2"/>
    <property type="match status" value="1"/>
</dbReference>
<comment type="function">
    <text evidence="1">Co-chaperone involved in the maturation of iron-sulfur cluster-containing proteins. Seems to help targeting proteins to be folded toward HscA.</text>
</comment>
<comment type="subunit">
    <text evidence="1">Interacts with HscA and stimulates its ATPase activity.</text>
</comment>
<comment type="similarity">
    <text evidence="1">Belongs to the HscB family.</text>
</comment>
<name>HSCB_PSEAE</name>